<comment type="function">
    <text evidence="3">May play a role in cardiomyocyte proliferation through paracrine signaling and activation of the PPI3K-AKT-CDK7 signaling cascade.</text>
</comment>
<comment type="subcellular location">
    <subcellularLocation>
        <location>Cytoplasmic vesicle</location>
        <location>COPI-coated vesicle</location>
    </subcellularLocation>
    <subcellularLocation>
        <location>Golgi apparatus</location>
    </subcellularLocation>
    <subcellularLocation>
        <location>Secreted</location>
    </subcellularLocation>
</comment>
<comment type="alternative products">
    <event type="alternative splicing"/>
    <isoform>
        <id>Q8NDZ4-1</id>
        <name>1</name>
        <sequence type="displayed"/>
    </isoform>
    <isoform>
        <id>Q8NDZ4-2</id>
        <name>2</name>
        <sequence type="described" ref="VSP_042939 VSP_042940"/>
    </isoform>
</comment>
<comment type="disease">
    <text evidence="2">Genetic variations in C3orf58 may be associated with susceptibility to autism (PubMed:18621663).</text>
</comment>
<comment type="similarity">
    <text evidence="7">Belongs to the DIPK family.</text>
</comment>
<proteinExistence type="evidence at protein level"/>
<keyword id="KW-0025">Alternative splicing</keyword>
<keyword id="KW-1269">Autism</keyword>
<keyword id="KW-1268">Autism spectrum disorder</keyword>
<keyword id="KW-0968">Cytoplasmic vesicle</keyword>
<keyword id="KW-0333">Golgi apparatus</keyword>
<keyword id="KW-1267">Proteomics identification</keyword>
<keyword id="KW-1185">Reference proteome</keyword>
<keyword id="KW-0964">Secreted</keyword>
<keyword id="KW-0732">Signal</keyword>
<organism>
    <name type="scientific">Homo sapiens</name>
    <name type="common">Human</name>
    <dbReference type="NCBI Taxonomy" id="9606"/>
    <lineage>
        <taxon>Eukaryota</taxon>
        <taxon>Metazoa</taxon>
        <taxon>Chordata</taxon>
        <taxon>Craniata</taxon>
        <taxon>Vertebrata</taxon>
        <taxon>Euteleostomi</taxon>
        <taxon>Mammalia</taxon>
        <taxon>Eutheria</taxon>
        <taxon>Euarchontoglires</taxon>
        <taxon>Primates</taxon>
        <taxon>Haplorrhini</taxon>
        <taxon>Catarrhini</taxon>
        <taxon>Hominidae</taxon>
        <taxon>Homo</taxon>
    </lineage>
</organism>
<reference key="1">
    <citation type="journal article" date="2004" name="Nat. Genet.">
        <title>Complete sequencing and characterization of 21,243 full-length human cDNAs.</title>
        <authorList>
            <person name="Ota T."/>
            <person name="Suzuki Y."/>
            <person name="Nishikawa T."/>
            <person name="Otsuki T."/>
            <person name="Sugiyama T."/>
            <person name="Irie R."/>
            <person name="Wakamatsu A."/>
            <person name="Hayashi K."/>
            <person name="Sato H."/>
            <person name="Nagai K."/>
            <person name="Kimura K."/>
            <person name="Makita H."/>
            <person name="Sekine M."/>
            <person name="Obayashi M."/>
            <person name="Nishi T."/>
            <person name="Shibahara T."/>
            <person name="Tanaka T."/>
            <person name="Ishii S."/>
            <person name="Yamamoto J."/>
            <person name="Saito K."/>
            <person name="Kawai Y."/>
            <person name="Isono Y."/>
            <person name="Nakamura Y."/>
            <person name="Nagahari K."/>
            <person name="Murakami K."/>
            <person name="Yasuda T."/>
            <person name="Iwayanagi T."/>
            <person name="Wagatsuma M."/>
            <person name="Shiratori A."/>
            <person name="Sudo H."/>
            <person name="Hosoiri T."/>
            <person name="Kaku Y."/>
            <person name="Kodaira H."/>
            <person name="Kondo H."/>
            <person name="Sugawara M."/>
            <person name="Takahashi M."/>
            <person name="Kanda K."/>
            <person name="Yokoi T."/>
            <person name="Furuya T."/>
            <person name="Kikkawa E."/>
            <person name="Omura Y."/>
            <person name="Abe K."/>
            <person name="Kamihara K."/>
            <person name="Katsuta N."/>
            <person name="Sato K."/>
            <person name="Tanikawa M."/>
            <person name="Yamazaki M."/>
            <person name="Ninomiya K."/>
            <person name="Ishibashi T."/>
            <person name="Yamashita H."/>
            <person name="Murakawa K."/>
            <person name="Fujimori K."/>
            <person name="Tanai H."/>
            <person name="Kimata M."/>
            <person name="Watanabe M."/>
            <person name="Hiraoka S."/>
            <person name="Chiba Y."/>
            <person name="Ishida S."/>
            <person name="Ono Y."/>
            <person name="Takiguchi S."/>
            <person name="Watanabe S."/>
            <person name="Yosida M."/>
            <person name="Hotuta T."/>
            <person name="Kusano J."/>
            <person name="Kanehori K."/>
            <person name="Takahashi-Fujii A."/>
            <person name="Hara H."/>
            <person name="Tanase T.-O."/>
            <person name="Nomura Y."/>
            <person name="Togiya S."/>
            <person name="Komai F."/>
            <person name="Hara R."/>
            <person name="Takeuchi K."/>
            <person name="Arita M."/>
            <person name="Imose N."/>
            <person name="Musashino K."/>
            <person name="Yuuki H."/>
            <person name="Oshima A."/>
            <person name="Sasaki N."/>
            <person name="Aotsuka S."/>
            <person name="Yoshikawa Y."/>
            <person name="Matsunawa H."/>
            <person name="Ichihara T."/>
            <person name="Shiohata N."/>
            <person name="Sano S."/>
            <person name="Moriya S."/>
            <person name="Momiyama H."/>
            <person name="Satoh N."/>
            <person name="Takami S."/>
            <person name="Terashima Y."/>
            <person name="Suzuki O."/>
            <person name="Nakagawa S."/>
            <person name="Senoh A."/>
            <person name="Mizoguchi H."/>
            <person name="Goto Y."/>
            <person name="Shimizu F."/>
            <person name="Wakebe H."/>
            <person name="Hishigaki H."/>
            <person name="Watanabe T."/>
            <person name="Sugiyama A."/>
            <person name="Takemoto M."/>
            <person name="Kawakami B."/>
            <person name="Yamazaki M."/>
            <person name="Watanabe K."/>
            <person name="Kumagai A."/>
            <person name="Itakura S."/>
            <person name="Fukuzumi Y."/>
            <person name="Fujimori Y."/>
            <person name="Komiyama M."/>
            <person name="Tashiro H."/>
            <person name="Tanigami A."/>
            <person name="Fujiwara T."/>
            <person name="Ono T."/>
            <person name="Yamada K."/>
            <person name="Fujii Y."/>
            <person name="Ozaki K."/>
            <person name="Hirao M."/>
            <person name="Ohmori Y."/>
            <person name="Kawabata A."/>
            <person name="Hikiji T."/>
            <person name="Kobatake N."/>
            <person name="Inagaki H."/>
            <person name="Ikema Y."/>
            <person name="Okamoto S."/>
            <person name="Okitani R."/>
            <person name="Kawakami T."/>
            <person name="Noguchi S."/>
            <person name="Itoh T."/>
            <person name="Shigeta K."/>
            <person name="Senba T."/>
            <person name="Matsumura K."/>
            <person name="Nakajima Y."/>
            <person name="Mizuno T."/>
            <person name="Morinaga M."/>
            <person name="Sasaki M."/>
            <person name="Togashi T."/>
            <person name="Oyama M."/>
            <person name="Hata H."/>
            <person name="Watanabe M."/>
            <person name="Komatsu T."/>
            <person name="Mizushima-Sugano J."/>
            <person name="Satoh T."/>
            <person name="Shirai Y."/>
            <person name="Takahashi Y."/>
            <person name="Nakagawa K."/>
            <person name="Okumura K."/>
            <person name="Nagase T."/>
            <person name="Nomura N."/>
            <person name="Kikuchi H."/>
            <person name="Masuho Y."/>
            <person name="Yamashita R."/>
            <person name="Nakai K."/>
            <person name="Yada T."/>
            <person name="Nakamura Y."/>
            <person name="Ohara O."/>
            <person name="Isogai T."/>
            <person name="Sugano S."/>
        </authorList>
    </citation>
    <scope>NUCLEOTIDE SEQUENCE [LARGE SCALE MRNA] (ISOFORMS 1 AND 2)</scope>
    <source>
        <tissue>Cerebellum</tissue>
        <tissue>Trachea</tissue>
    </source>
</reference>
<reference key="2">
    <citation type="journal article" date="2006" name="Nature">
        <title>The DNA sequence, annotation and analysis of human chromosome 3.</title>
        <authorList>
            <person name="Muzny D.M."/>
            <person name="Scherer S.E."/>
            <person name="Kaul R."/>
            <person name="Wang J."/>
            <person name="Yu J."/>
            <person name="Sudbrak R."/>
            <person name="Buhay C.J."/>
            <person name="Chen R."/>
            <person name="Cree A."/>
            <person name="Ding Y."/>
            <person name="Dugan-Rocha S."/>
            <person name="Gill R."/>
            <person name="Gunaratne P."/>
            <person name="Harris R.A."/>
            <person name="Hawes A.C."/>
            <person name="Hernandez J."/>
            <person name="Hodgson A.V."/>
            <person name="Hume J."/>
            <person name="Jackson A."/>
            <person name="Khan Z.M."/>
            <person name="Kovar-Smith C."/>
            <person name="Lewis L.R."/>
            <person name="Lozado R.J."/>
            <person name="Metzker M.L."/>
            <person name="Milosavljevic A."/>
            <person name="Miner G.R."/>
            <person name="Morgan M.B."/>
            <person name="Nazareth L.V."/>
            <person name="Scott G."/>
            <person name="Sodergren E."/>
            <person name="Song X.-Z."/>
            <person name="Steffen D."/>
            <person name="Wei S."/>
            <person name="Wheeler D.A."/>
            <person name="Wright M.W."/>
            <person name="Worley K.C."/>
            <person name="Yuan Y."/>
            <person name="Zhang Z."/>
            <person name="Adams C.Q."/>
            <person name="Ansari-Lari M.A."/>
            <person name="Ayele M."/>
            <person name="Brown M.J."/>
            <person name="Chen G."/>
            <person name="Chen Z."/>
            <person name="Clendenning J."/>
            <person name="Clerc-Blankenburg K.P."/>
            <person name="Chen R."/>
            <person name="Chen Z."/>
            <person name="Davis C."/>
            <person name="Delgado O."/>
            <person name="Dinh H.H."/>
            <person name="Dong W."/>
            <person name="Draper H."/>
            <person name="Ernst S."/>
            <person name="Fu G."/>
            <person name="Gonzalez-Garay M.L."/>
            <person name="Garcia D.K."/>
            <person name="Gillett W."/>
            <person name="Gu J."/>
            <person name="Hao B."/>
            <person name="Haugen E."/>
            <person name="Havlak P."/>
            <person name="He X."/>
            <person name="Hennig S."/>
            <person name="Hu S."/>
            <person name="Huang W."/>
            <person name="Jackson L.R."/>
            <person name="Jacob L.S."/>
            <person name="Kelly S.H."/>
            <person name="Kube M."/>
            <person name="Levy R."/>
            <person name="Li Z."/>
            <person name="Liu B."/>
            <person name="Liu J."/>
            <person name="Liu W."/>
            <person name="Lu J."/>
            <person name="Maheshwari M."/>
            <person name="Nguyen B.-V."/>
            <person name="Okwuonu G.O."/>
            <person name="Palmeiri A."/>
            <person name="Pasternak S."/>
            <person name="Perez L.M."/>
            <person name="Phelps K.A."/>
            <person name="Plopper F.J."/>
            <person name="Qiang B."/>
            <person name="Raymond C."/>
            <person name="Rodriguez R."/>
            <person name="Saenphimmachak C."/>
            <person name="Santibanez J."/>
            <person name="Shen H."/>
            <person name="Shen Y."/>
            <person name="Subramanian S."/>
            <person name="Tabor P.E."/>
            <person name="Verduzco D."/>
            <person name="Waldron L."/>
            <person name="Wang J."/>
            <person name="Wang J."/>
            <person name="Wang Q."/>
            <person name="Williams G.A."/>
            <person name="Wong G.K.-S."/>
            <person name="Yao Z."/>
            <person name="Zhang J."/>
            <person name="Zhang X."/>
            <person name="Zhao G."/>
            <person name="Zhou J."/>
            <person name="Zhou Y."/>
            <person name="Nelson D."/>
            <person name="Lehrach H."/>
            <person name="Reinhardt R."/>
            <person name="Naylor S.L."/>
            <person name="Yang H."/>
            <person name="Olson M."/>
            <person name="Weinstock G."/>
            <person name="Gibbs R.A."/>
        </authorList>
    </citation>
    <scope>NUCLEOTIDE SEQUENCE [LARGE SCALE GENOMIC DNA]</scope>
</reference>
<reference key="3">
    <citation type="journal article" date="2004" name="Genome Res.">
        <title>The status, quality, and expansion of the NIH full-length cDNA project: the Mammalian Gene Collection (MGC).</title>
        <authorList>
            <consortium name="The MGC Project Team"/>
        </authorList>
    </citation>
    <scope>NUCLEOTIDE SEQUENCE [LARGE SCALE MRNA] (ISOFORM 1)</scope>
    <source>
        <tissue>Testis</tissue>
    </source>
</reference>
<reference key="4">
    <citation type="journal article" date="2008" name="Dev. Dyn.">
        <title>Expression of the novel Golgi protein GoPro49 is developmentally regulated during mesenchymal differentiation.</title>
        <authorList>
            <person name="Takatalo M."/>
            <person name="Jaervinen E."/>
            <person name="Laitinen S."/>
            <person name="Thesleff I."/>
            <person name="Roennholm R."/>
        </authorList>
    </citation>
    <scope>IDENTIFICATION</scope>
    <scope>SUBCELLULAR LOCATION</scope>
</reference>
<reference key="5">
    <citation type="journal article" date="2008" name="Science">
        <title>Identifying autism loci and genes by tracing recent shared ancestry.</title>
        <authorList>
            <person name="Morrow E.M."/>
            <person name="Yoo S.-Y."/>
            <person name="Flavell S.W."/>
            <person name="Kim T.-K."/>
            <person name="Lin Y."/>
            <person name="Hill R.S."/>
            <person name="Mukaddes N.M."/>
            <person name="Balkhy S."/>
            <person name="Gascon G."/>
            <person name="Hashmi A."/>
            <person name="Al-Saad S."/>
            <person name="Ware J."/>
            <person name="Joseph R.M."/>
            <person name="Greenblatt R."/>
            <person name="Gleason D."/>
            <person name="Ertelt J.A."/>
            <person name="Apse K.A."/>
            <person name="Bodell A."/>
            <person name="Partlow J.N."/>
            <person name="Barry B."/>
            <person name="Yao H."/>
            <person name="Markianos K."/>
            <person name="Ferland R.J."/>
            <person name="Greenberg M.E."/>
            <person name="Walsh C.A."/>
        </authorList>
    </citation>
    <scope>POSSIBLE INVOLVEMENT IN SUSCEPTIBILITY TO AUTISM</scope>
</reference>
<reference key="6">
    <citation type="journal article" date="2013" name="Circ. Res.">
        <title>C3orf58, a novel paracrine protein, stimulates cardiomyocyte cell-cycle progression through the PI3K-AKT-CDK7 pathway.</title>
        <authorList>
            <person name="Beigi F."/>
            <person name="Schmeckpeper J."/>
            <person name="Pow-Anpongkul P."/>
            <person name="Payne J.A."/>
            <person name="Zhang L."/>
            <person name="Zhang Z."/>
            <person name="Huang J."/>
            <person name="Mirotsou M."/>
            <person name="Dzau V.J."/>
        </authorList>
    </citation>
    <scope>FUNCTION IN PROLIFERATION</scope>
    <scope>SUBCELLULAR LOCATION</scope>
</reference>
<sequence>MWRLVPPKLGRLSRSLKLAALGSLLVLMVLHSPSLLASWQRNELTDRRFLQLNKCPACFGTSWCRRFLNGQVVFEAWGRLRLLDFLNVKNVYFAQYGEPREGGRRRVVLKRLGSQRELAQLDQSICKRATGRPRCDLLQAMPRTEFARLNGDVRLLTPEAVEGWSDLVHCPSQRLLDRLVRRYAETKDSGSFLLRNLKDSERMQLLLTLAFNPEPLVLQSFPSDEGWPFAKYLGACGRMVAVNYVGEELWSYFNAPWEKRVDLAWQLMEIAEQLTNNDFEFALYLLDVSFDNFAVGPRDGKVIIVDAENVLVADKRLIRQNKPENWDVWYESKFDDCDKEACLSFSKEILCARATVDHNYYAVCQNLLSRHATWRGTSGGLLHDPPSEIAKDGRLEALLDECANPKKRYGRFQAAKELREYLAQLSNNVR</sequence>
<dbReference type="EMBL" id="AK294020">
    <property type="protein sequence ID" value="BAH11649.1"/>
    <property type="molecule type" value="mRNA"/>
</dbReference>
<dbReference type="EMBL" id="AK315082">
    <property type="protein sequence ID" value="BAG37549.1"/>
    <property type="molecule type" value="mRNA"/>
</dbReference>
<dbReference type="EMBL" id="AC117379">
    <property type="status" value="NOT_ANNOTATED_CDS"/>
    <property type="molecule type" value="Genomic_DNA"/>
</dbReference>
<dbReference type="EMBL" id="AC117387">
    <property type="status" value="NOT_ANNOTATED_CDS"/>
    <property type="molecule type" value="Genomic_DNA"/>
</dbReference>
<dbReference type="EMBL" id="BC037293">
    <property type="protein sequence ID" value="AAH37293.1"/>
    <property type="molecule type" value="mRNA"/>
</dbReference>
<dbReference type="CCDS" id="CCDS3130.1">
    <molecule id="Q8NDZ4-1"/>
</dbReference>
<dbReference type="CCDS" id="CCDS46929.1">
    <molecule id="Q8NDZ4-2"/>
</dbReference>
<dbReference type="RefSeq" id="NP_001127942.1">
    <molecule id="Q8NDZ4-2"/>
    <property type="nucleotide sequence ID" value="NM_001134470.2"/>
</dbReference>
<dbReference type="RefSeq" id="NP_775823.1">
    <molecule id="Q8NDZ4-1"/>
    <property type="nucleotide sequence ID" value="NM_173552.5"/>
</dbReference>
<dbReference type="BioGRID" id="128496">
    <property type="interactions" value="74"/>
</dbReference>
<dbReference type="FunCoup" id="Q8NDZ4">
    <property type="interactions" value="445"/>
</dbReference>
<dbReference type="IntAct" id="Q8NDZ4">
    <property type="interactions" value="65"/>
</dbReference>
<dbReference type="MINT" id="Q8NDZ4"/>
<dbReference type="STRING" id="9606.ENSP00000320081"/>
<dbReference type="GlyGen" id="Q8NDZ4">
    <property type="glycosylation" value="1 site, 1 O-linked glycan (1 site)"/>
</dbReference>
<dbReference type="iPTMnet" id="Q8NDZ4"/>
<dbReference type="PhosphoSitePlus" id="Q8NDZ4"/>
<dbReference type="SwissPalm" id="Q8NDZ4"/>
<dbReference type="BioMuta" id="C3orf58"/>
<dbReference type="DMDM" id="74730188"/>
<dbReference type="jPOST" id="Q8NDZ4"/>
<dbReference type="MassIVE" id="Q8NDZ4"/>
<dbReference type="PaxDb" id="9606-ENSP00000320081"/>
<dbReference type="PeptideAtlas" id="Q8NDZ4"/>
<dbReference type="ProteomicsDB" id="73100">
    <molecule id="Q8NDZ4-1"/>
</dbReference>
<dbReference type="ProteomicsDB" id="73101">
    <molecule id="Q8NDZ4-2"/>
</dbReference>
<dbReference type="Pumba" id="Q8NDZ4"/>
<dbReference type="Antibodypedia" id="52825">
    <property type="antibodies" value="97 antibodies from 15 providers"/>
</dbReference>
<dbReference type="DNASU" id="205428"/>
<dbReference type="Ensembl" id="ENST00000315691.8">
    <molecule id="Q8NDZ4-1"/>
    <property type="protein sequence ID" value="ENSP00000320081.4"/>
    <property type="gene ID" value="ENSG00000181744.9"/>
</dbReference>
<dbReference type="Ensembl" id="ENST00000495414.5">
    <molecule id="Q8NDZ4-2"/>
    <property type="protein sequence ID" value="ENSP00000417382.1"/>
    <property type="gene ID" value="ENSG00000181744.9"/>
</dbReference>
<dbReference type="GeneID" id="205428"/>
<dbReference type="KEGG" id="hsa:205428"/>
<dbReference type="MANE-Select" id="ENST00000315691.8">
    <property type="protein sequence ID" value="ENSP00000320081.4"/>
    <property type="RefSeq nucleotide sequence ID" value="NM_173552.5"/>
    <property type="RefSeq protein sequence ID" value="NP_775823.1"/>
</dbReference>
<dbReference type="UCSC" id="uc003evo.4">
    <molecule id="Q8NDZ4-1"/>
    <property type="organism name" value="human"/>
</dbReference>
<dbReference type="AGR" id="HGNC:28490"/>
<dbReference type="CTD" id="205428"/>
<dbReference type="DisGeNET" id="205428"/>
<dbReference type="GeneCards" id="DIPK2A"/>
<dbReference type="HGNC" id="HGNC:28490">
    <property type="gene designation" value="DIPK2A"/>
</dbReference>
<dbReference type="HPA" id="ENSG00000181744">
    <property type="expression patterns" value="Low tissue specificity"/>
</dbReference>
<dbReference type="MIM" id="612200">
    <property type="type" value="gene"/>
</dbReference>
<dbReference type="neXtProt" id="NX_Q8NDZ4"/>
<dbReference type="OpenTargets" id="ENSG00000181744"/>
<dbReference type="PharmGKB" id="PA143485334"/>
<dbReference type="VEuPathDB" id="HostDB:ENSG00000181744"/>
<dbReference type="eggNOG" id="ENOG502QUEB">
    <property type="taxonomic scope" value="Eukaryota"/>
</dbReference>
<dbReference type="GeneTree" id="ENSGT00520000055625"/>
<dbReference type="HOGENOM" id="CLU_052524_0_0_1"/>
<dbReference type="InParanoid" id="Q8NDZ4"/>
<dbReference type="OMA" id="LWAACYI"/>
<dbReference type="OrthoDB" id="10035316at2759"/>
<dbReference type="PAN-GO" id="Q8NDZ4">
    <property type="GO annotations" value="4 GO annotations based on evolutionary models"/>
</dbReference>
<dbReference type="PhylomeDB" id="Q8NDZ4"/>
<dbReference type="TreeFam" id="TF313319"/>
<dbReference type="PathwayCommons" id="Q8NDZ4"/>
<dbReference type="SignaLink" id="Q8NDZ4"/>
<dbReference type="BioGRID-ORCS" id="205428">
    <property type="hits" value="10 hits in 1139 CRISPR screens"/>
</dbReference>
<dbReference type="ChiTaRS" id="C3orf58">
    <property type="organism name" value="human"/>
</dbReference>
<dbReference type="GenomeRNAi" id="205428"/>
<dbReference type="Pharos" id="Q8NDZ4">
    <property type="development level" value="Tbio"/>
</dbReference>
<dbReference type="PRO" id="PR:Q8NDZ4"/>
<dbReference type="Proteomes" id="UP000005640">
    <property type="component" value="Chromosome 3"/>
</dbReference>
<dbReference type="RNAct" id="Q8NDZ4">
    <property type="molecule type" value="protein"/>
</dbReference>
<dbReference type="Bgee" id="ENSG00000181744">
    <property type="expression patterns" value="Expressed in cerebellar vermis and 193 other cell types or tissues"/>
</dbReference>
<dbReference type="ExpressionAtlas" id="Q8NDZ4">
    <property type="expression patterns" value="baseline and differential"/>
</dbReference>
<dbReference type="GO" id="GO:0030126">
    <property type="term" value="C:COPI vesicle coat"/>
    <property type="evidence" value="ECO:0000314"/>
    <property type="project" value="MGI"/>
</dbReference>
<dbReference type="GO" id="GO:0005615">
    <property type="term" value="C:extracellular space"/>
    <property type="evidence" value="ECO:0000314"/>
    <property type="project" value="UniProtKB"/>
</dbReference>
<dbReference type="GO" id="GO:0000139">
    <property type="term" value="C:Golgi membrane"/>
    <property type="evidence" value="ECO:0000314"/>
    <property type="project" value="MGI"/>
</dbReference>
<dbReference type="GO" id="GO:0060038">
    <property type="term" value="P:cardiac muscle cell proliferation"/>
    <property type="evidence" value="ECO:0000314"/>
    <property type="project" value="UniProtKB"/>
</dbReference>
<dbReference type="GO" id="GO:0034392">
    <property type="term" value="P:negative regulation of smooth muscle cell apoptotic process"/>
    <property type="evidence" value="ECO:0000314"/>
    <property type="project" value="GO_Central"/>
</dbReference>
<dbReference type="GO" id="GO:1900020">
    <property type="term" value="P:positive regulation of protein kinase C activity"/>
    <property type="evidence" value="ECO:0000316"/>
    <property type="project" value="GO_Central"/>
</dbReference>
<dbReference type="GO" id="GO:0051896">
    <property type="term" value="P:regulation of phosphatidylinositol 3-kinase/protein kinase B signal transduction"/>
    <property type="evidence" value="ECO:0000314"/>
    <property type="project" value="UniProtKB"/>
</dbReference>
<dbReference type="InterPro" id="IPR020519">
    <property type="entry name" value="DIPK2A/B"/>
</dbReference>
<dbReference type="InterPro" id="IPR022049">
    <property type="entry name" value="FAM69_kinase_dom"/>
</dbReference>
<dbReference type="PANTHER" id="PTHR32073:SF6">
    <property type="entry name" value="DIVERGENT PROTEIN KINASE DOMAIN 2A"/>
    <property type="match status" value="1"/>
</dbReference>
<dbReference type="PANTHER" id="PTHR32073">
    <property type="entry name" value="GH11358P"/>
    <property type="match status" value="1"/>
</dbReference>
<dbReference type="Pfam" id="PF12260">
    <property type="entry name" value="PIP49_C"/>
    <property type="match status" value="1"/>
</dbReference>
<protein>
    <recommendedName>
        <fullName evidence="7">Divergent protein kinase domain 2A</fullName>
    </recommendedName>
    <alternativeName>
        <fullName evidence="5">Deleted in autism protein 1</fullName>
    </alternativeName>
    <alternativeName>
        <fullName evidence="6">Golgi Protein of 49 kDa</fullName>
        <shortName evidence="6">GoPro49</shortName>
    </alternativeName>
    <alternativeName>
        <fullName>Hypoxia and AKT-induced stem cell factor</fullName>
        <shortName>HASF</shortName>
    </alternativeName>
</protein>
<feature type="signal peptide" evidence="1">
    <location>
        <begin position="1"/>
        <end position="35"/>
    </location>
</feature>
<feature type="chain" id="PRO_0000226037" description="Divergent protein kinase domain 2A">
    <location>
        <begin position="36"/>
        <end position="430"/>
    </location>
</feature>
<feature type="splice variant" id="VSP_042939" description="In isoform 2." evidence="4">
    <original>MWRLVPPKLG</original>
    <variation>MKSENGTVVG</variation>
    <location>
        <begin position="1"/>
        <end position="10"/>
    </location>
</feature>
<feature type="splice variant" id="VSP_042940" description="In isoform 2." evidence="4">
    <location>
        <begin position="11"/>
        <end position="219"/>
    </location>
</feature>
<evidence type="ECO:0000255" key="1"/>
<evidence type="ECO:0000269" key="2">
    <source>
    </source>
</evidence>
<evidence type="ECO:0000269" key="3">
    <source>
    </source>
</evidence>
<evidence type="ECO:0000303" key="4">
    <source>
    </source>
</evidence>
<evidence type="ECO:0000303" key="5">
    <source>
    </source>
</evidence>
<evidence type="ECO:0000303" key="6">
    <source>
    </source>
</evidence>
<evidence type="ECO:0000305" key="7"/>
<evidence type="ECO:0000312" key="8">
    <source>
        <dbReference type="HGNC" id="HGNC:28490"/>
    </source>
</evidence>
<name>DIK2A_HUMAN</name>
<gene>
    <name evidence="8" type="primary">DIPK2A</name>
    <name type="synonym">C3orf58</name>
    <name evidence="5" type="synonym">DIA1</name>
</gene>
<accession>Q8NDZ4</accession>
<accession>B2RCF2</accession>
<accession>B7Z1W3</accession>